<accession>A0A8V8TNH8</accession>
<comment type="miscellaneous">
    <text evidence="3">Primate-specific FAM90A gene family, thought to have arisen during multiple duplication and rearrangement events.</text>
</comment>
<comment type="similarity">
    <text evidence="2">Belongs to the FAM90 family.</text>
</comment>
<feature type="chain" id="PRO_0000459431" description="Protein FAM90A11">
    <location>
        <begin position="1"/>
        <end position="464"/>
    </location>
</feature>
<feature type="region of interest" description="Disordered" evidence="1">
    <location>
        <begin position="1"/>
        <end position="42"/>
    </location>
</feature>
<feature type="region of interest" description="Disordered" evidence="1">
    <location>
        <begin position="70"/>
        <end position="389"/>
    </location>
</feature>
<feature type="region of interest" description="Disordered" evidence="1">
    <location>
        <begin position="415"/>
        <end position="437"/>
    </location>
</feature>
<feature type="compositionally biased region" description="Basic and acidic residues" evidence="1">
    <location>
        <begin position="74"/>
        <end position="89"/>
    </location>
</feature>
<feature type="compositionally biased region" description="Basic and acidic residues" evidence="1">
    <location>
        <begin position="97"/>
        <end position="114"/>
    </location>
</feature>
<feature type="compositionally biased region" description="Low complexity" evidence="1">
    <location>
        <begin position="180"/>
        <end position="197"/>
    </location>
</feature>
<feature type="compositionally biased region" description="Polar residues" evidence="1">
    <location>
        <begin position="341"/>
        <end position="356"/>
    </location>
</feature>
<proteinExistence type="evidence at protein level"/>
<protein>
    <recommendedName>
        <fullName evidence="4">Protein FAM90A11</fullName>
    </recommendedName>
</protein>
<organism>
    <name type="scientific">Homo sapiens</name>
    <name type="common">Human</name>
    <dbReference type="NCBI Taxonomy" id="9606"/>
    <lineage>
        <taxon>Eukaryota</taxon>
        <taxon>Metazoa</taxon>
        <taxon>Chordata</taxon>
        <taxon>Craniata</taxon>
        <taxon>Vertebrata</taxon>
        <taxon>Euteleostomi</taxon>
        <taxon>Mammalia</taxon>
        <taxon>Eutheria</taxon>
        <taxon>Euarchontoglires</taxon>
        <taxon>Primates</taxon>
        <taxon>Haplorrhini</taxon>
        <taxon>Catarrhini</taxon>
        <taxon>Hominidae</taxon>
        <taxon>Homo</taxon>
    </lineage>
</organism>
<keyword id="KW-1185">Reference proteome</keyword>
<name>F90AB_HUMAN</name>
<dbReference type="EMBL" id="AC105233">
    <property type="status" value="NOT_ANNOTATED_CDS"/>
    <property type="molecule type" value="Genomic_DNA"/>
</dbReference>
<dbReference type="RefSeq" id="NP_001410468.1">
    <property type="nucleotide sequence ID" value="NM_001423539.1"/>
</dbReference>
<dbReference type="Ensembl" id="ENST00000518378.2">
    <property type="protein sequence ID" value="ENSP00000514266.1"/>
    <property type="gene ID" value="ENSG00000233115.5"/>
</dbReference>
<dbReference type="GeneID" id="441331"/>
<dbReference type="MANE-Select" id="ENST00000518378.2">
    <property type="protein sequence ID" value="ENSP00000514266.1"/>
    <property type="RefSeq nucleotide sequence ID" value="NM_001423539.1"/>
    <property type="RefSeq protein sequence ID" value="NP_001410468.1"/>
</dbReference>
<dbReference type="AGR" id="HGNC:32259"/>
<dbReference type="GeneCards" id="FAM90A11"/>
<dbReference type="HGNC" id="HGNC:32259">
    <property type="gene designation" value="FAM90A11"/>
</dbReference>
<dbReference type="GeneTree" id="ENSGT00910000144208"/>
<dbReference type="PRO" id="PR:A0A8V8TNH8"/>
<dbReference type="Proteomes" id="UP000005640">
    <property type="component" value="Chromosome 8"/>
</dbReference>
<dbReference type="InterPro" id="IPR039213">
    <property type="entry name" value="FAM90"/>
</dbReference>
<dbReference type="InterPro" id="IPR041670">
    <property type="entry name" value="Znf-CCHC_6"/>
</dbReference>
<dbReference type="PANTHER" id="PTHR16035:SF14">
    <property type="entry name" value="FAMILY WITH SEQUENCE SIMILARITY 90 MEMBER A11, PSEUDOGENE-RELATED"/>
    <property type="match status" value="1"/>
</dbReference>
<dbReference type="PANTHER" id="PTHR16035">
    <property type="entry name" value="PROTEIN FAM90A1"/>
    <property type="match status" value="1"/>
</dbReference>
<dbReference type="Pfam" id="PF15288">
    <property type="entry name" value="zf-CCHC_6"/>
    <property type="match status" value="1"/>
</dbReference>
<reference key="1">
    <citation type="journal article" date="2006" name="Nature">
        <title>DNA sequence and analysis of human chromosome 8.</title>
        <authorList>
            <person name="Nusbaum C."/>
            <person name="Mikkelsen T.S."/>
            <person name="Zody M.C."/>
            <person name="Asakawa S."/>
            <person name="Taudien S."/>
            <person name="Garber M."/>
            <person name="Kodira C.D."/>
            <person name="Schueler M.G."/>
            <person name="Shimizu A."/>
            <person name="Whittaker C.A."/>
            <person name="Chang J.L."/>
            <person name="Cuomo C.A."/>
            <person name="Dewar K."/>
            <person name="FitzGerald M.G."/>
            <person name="Yang X."/>
            <person name="Allen N.R."/>
            <person name="Anderson S."/>
            <person name="Asakawa T."/>
            <person name="Blechschmidt K."/>
            <person name="Bloom T."/>
            <person name="Borowsky M.L."/>
            <person name="Butler J."/>
            <person name="Cook A."/>
            <person name="Corum B."/>
            <person name="DeArellano K."/>
            <person name="DeCaprio D."/>
            <person name="Dooley K.T."/>
            <person name="Dorris L. III"/>
            <person name="Engels R."/>
            <person name="Gloeckner G."/>
            <person name="Hafez N."/>
            <person name="Hagopian D.S."/>
            <person name="Hall J.L."/>
            <person name="Ishikawa S.K."/>
            <person name="Jaffe D.B."/>
            <person name="Kamat A."/>
            <person name="Kudoh J."/>
            <person name="Lehmann R."/>
            <person name="Lokitsang T."/>
            <person name="Macdonald P."/>
            <person name="Major J.E."/>
            <person name="Matthews C.D."/>
            <person name="Mauceli E."/>
            <person name="Menzel U."/>
            <person name="Mihalev A.H."/>
            <person name="Minoshima S."/>
            <person name="Murayama Y."/>
            <person name="Naylor J.W."/>
            <person name="Nicol R."/>
            <person name="Nguyen C."/>
            <person name="O'Leary S.B."/>
            <person name="O'Neill K."/>
            <person name="Parker S.C.J."/>
            <person name="Polley A."/>
            <person name="Raymond C.K."/>
            <person name="Reichwald K."/>
            <person name="Rodriguez J."/>
            <person name="Sasaki T."/>
            <person name="Schilhabel M."/>
            <person name="Siddiqui R."/>
            <person name="Smith C.L."/>
            <person name="Sneddon T.P."/>
            <person name="Talamas J.A."/>
            <person name="Tenzin P."/>
            <person name="Topham K."/>
            <person name="Venkataraman V."/>
            <person name="Wen G."/>
            <person name="Yamazaki S."/>
            <person name="Young S.K."/>
            <person name="Zeng Q."/>
            <person name="Zimmer A.R."/>
            <person name="Rosenthal A."/>
            <person name="Birren B.W."/>
            <person name="Platzer M."/>
            <person name="Shimizu N."/>
            <person name="Lander E.S."/>
        </authorList>
    </citation>
    <scope>NUCLEOTIDE SEQUENCE [LARGE SCALE GENOMIC DNA]</scope>
</reference>
<reference key="2">
    <citation type="journal article" date="2007" name="Hum. Mol. Genet.">
        <title>Characterization and evolution of the novel gene family FAM90A in primates originated by multiple duplication and rearrangement events.</title>
        <authorList>
            <person name="Bosch N."/>
            <person name="Caceres M."/>
            <person name="Cardone M.F."/>
            <person name="Carreras A."/>
            <person name="Ballana E."/>
            <person name="Rocchi M."/>
            <person name="Armengol L."/>
            <person name="Estivill X."/>
        </authorList>
    </citation>
    <scope>CHARACTERIZATION</scope>
</reference>
<sequence length="464" mass="49704">MMARRDPTSWAKRLVRAQTLQKQRRAPVGPRAPPPDEEDPRLKCKNCGAFGHTARSTRCPMKCWKAALVPATLGKKEGKENLKPWKPRVEANPGPLNKDKGEKEERPRQQDPQRKALLHMFSGKPPEKPLPNGKGSTEPSDYLRVASGPMPVHTTSKRPRVDPVLADGSATEMSGRGSVLASLSPLRKASLSSSSSLGPKERQTGAAADIPQPAVRHQGREPLLVVKPTHSSPEGGCREVPQAASKTHGLLQAARPQAQDKRPAVTSQPCPPAATHSLGLGSNLSFGPGAKRPAQAPIQACLNFPKKPRLGPFQIPESAIQGGELGALENLQPPPAATELGPSTSPQMGRRTSAQVPSVERQPPHSRPCLPTAQACTMSHHSAASHDGAQPLRVLFRRLENGRWSSSLLAAPSFHSPEKPGAFLAQSPHVSEKSEAPCVRVPPSVLYEDLQVSSSSEDSDSDLE</sequence>
<evidence type="ECO:0000256" key="1">
    <source>
        <dbReference type="SAM" id="MobiDB-lite"/>
    </source>
</evidence>
<evidence type="ECO:0000305" key="2"/>
<evidence type="ECO:0000305" key="3">
    <source>
    </source>
</evidence>
<evidence type="ECO:0000312" key="4">
    <source>
        <dbReference type="HGNC" id="HGNC:32259"/>
    </source>
</evidence>
<gene>
    <name evidence="4" type="primary">FAM90A11</name>
    <name type="synonym">FAM90A11P</name>
</gene>